<sequence length="173" mass="18722">MANPVQPQLQDPGSTSPLDLPEMEKLLTKVENKDDQALNLSKSLSGALDLEQNGHSLPFKVISEGHRQPSLSGSPSRASSRRASSVVTTSYAQDQEAPKDYLVLAIASCFCPVWPLNLIPLIFSIMSRSSVQQGDLDGARRLGRLARLLSITFIILGIVIIIVAVTVNFTVPK</sequence>
<keyword id="KW-1003">Cell membrane</keyword>
<keyword id="KW-0963">Cytoplasm</keyword>
<keyword id="KW-0472">Membrane</keyword>
<keyword id="KW-0597">Phosphoprotein</keyword>
<keyword id="KW-1185">Reference proteome</keyword>
<keyword id="KW-0812">Transmembrane</keyword>
<keyword id="KW-1133">Transmembrane helix</keyword>
<evidence type="ECO:0000250" key="1">
    <source>
        <dbReference type="UniProtKB" id="Q8C838"/>
    </source>
</evidence>
<evidence type="ECO:0000255" key="2"/>
<evidence type="ECO:0000256" key="3">
    <source>
        <dbReference type="SAM" id="MobiDB-lite"/>
    </source>
</evidence>
<evidence type="ECO:0000269" key="4">
    <source>
    </source>
</evidence>
<evidence type="ECO:0000269" key="5">
    <source>
    </source>
</evidence>
<evidence type="ECO:0000269" key="6">
    <source>
    </source>
</evidence>
<evidence type="ECO:0000305" key="7"/>
<evidence type="ECO:0000305" key="8">
    <source>
    </source>
</evidence>
<evidence type="ECO:0000305" key="9">
    <source>
    </source>
</evidence>
<evidence type="ECO:0000312" key="10">
    <source>
        <dbReference type="RGD" id="1307639"/>
    </source>
</evidence>
<evidence type="ECO:0007744" key="11">
    <source>
    </source>
</evidence>
<comment type="function">
    <text evidence="8 9">Regulates insulin-mediated adipose tissue glucose uptake and transport by modulation of SLC2A4 recycling. Not required for SLC2A4 membrane fusion upon an initial stimulus, but rather is necessary for proper protein recycling during prolonged insulin stimulation.</text>
</comment>
<comment type="subunit">
    <text evidence="1">Interacts with SLC2A4; the interaction is required for proper SLC2A4 reacycling after insulin stimulation.</text>
</comment>
<comment type="subcellular location">
    <subcellularLocation>
        <location evidence="1">Cell membrane</location>
        <topology evidence="7">Single-pass membrane protein</topology>
    </subcellularLocation>
    <subcellularLocation>
        <location evidence="6">Endomembrane system</location>
        <topology evidence="7">Single-pass membrane protein</topology>
    </subcellularLocation>
    <subcellularLocation>
        <location evidence="6">Cytoplasm</location>
        <location evidence="6">Perinuclear region</location>
    </subcellularLocation>
    <text evidence="1">Shifts from low-density microsome vesicles to the cell membrane upon insulin stimulation.</text>
</comment>
<comment type="tissue specificity">
    <text evidence="4 5 6">Present in adipose tissue and undetectable in other tissues (at protein level).</text>
</comment>
<comment type="developmental stage">
    <text evidence="5">Up-regulated during differentiation in primary cultured rat brown preadipocytes.</text>
</comment>
<comment type="induction">
    <text evidence="5">Down-regulated upon cold exposure in brown adipose tissue in Zucker lean rats. Down-regulated by dexamethasone.</text>
</comment>
<comment type="similarity">
    <text evidence="7">Belongs to the CD225/Dispanin family.</text>
</comment>
<reference key="1">
    <citation type="journal article" date="2007" name="Mol. Cell. Endocrinol.">
        <title>Molecular cloning and characterization of rat brain endothelial cell derived gene-1 (tumor suppressor candidate 5) expressing abundantly in adipose tissues.</title>
        <authorList>
            <person name="Shibata T."/>
            <person name="Koide H."/>
            <person name="Hayashi R."/>
            <person name="Nagata K."/>
            <person name="Takeo C."/>
            <person name="Yoshida T."/>
            <person name="Noguchi Y."/>
            <person name="Tanaka T."/>
            <person name="Saito Y."/>
            <person name="Tatsuno I."/>
        </authorList>
    </citation>
    <scope>NUCLEOTIDE SEQUENCE [MRNA]</scope>
    <scope>FUNCTION</scope>
    <scope>TISSUE SPECIFICITY</scope>
    <source>
        <tissue>Brain</tissue>
    </source>
</reference>
<reference key="2">
    <citation type="journal article" date="2007" name="Biochem. Biophys. Res. Commun.">
        <title>Tumor suppressor candidate 5 (TUSC5) is expressed in brown adipocytes.</title>
        <authorList>
            <person name="Koide H."/>
            <person name="Shibata T."/>
            <person name="Yamada N."/>
            <person name="Asaki T."/>
            <person name="Nagao T."/>
            <person name="Yoshida T."/>
            <person name="Noguchi Y."/>
            <person name="Tanaka T."/>
            <person name="Saito Y."/>
            <person name="Tatsuno I."/>
        </authorList>
    </citation>
    <scope>INDUCTION</scope>
    <scope>TISSUE SPECIFICITY</scope>
    <scope>DEVELOPMENTAL STAGE</scope>
</reference>
<reference key="3">
    <citation type="journal article" date="2012" name="Nat. Commun.">
        <title>Quantitative maps of protein phosphorylation sites across 14 different rat organs and tissues.</title>
        <authorList>
            <person name="Lundby A."/>
            <person name="Secher A."/>
            <person name="Lage K."/>
            <person name="Nordsborg N.B."/>
            <person name="Dmytriyev A."/>
            <person name="Lundby C."/>
            <person name="Olsen J.V."/>
        </authorList>
    </citation>
    <scope>PHOSPHORYLATION [LARGE SCALE ANALYSIS] AT SER-16; SER-43; SER-45; SER-70; SER-84 AND SER-85</scope>
    <scope>IDENTIFICATION BY MASS SPECTROMETRY [LARGE SCALE ANALYSIS]</scope>
</reference>
<reference key="4">
    <citation type="journal article" date="2012" name="PLoS ONE">
        <title>The dispanins: a novel gene family of ancient origin that contains 14 human members.</title>
        <authorList>
            <person name="Sallman Almen M."/>
            <person name="Bringeland N."/>
            <person name="Fredriksson R."/>
            <person name="Schioth H.B."/>
        </authorList>
    </citation>
    <scope>GENE FAMILY</scope>
</reference>
<reference key="5">
    <citation type="journal article" date="2015" name="J. Biol. Chem.">
        <title>Proteomic Analysis of GLUT4 Storage Vesicles Reveals Tumor Suppressor Candidate 5 (TUSC5) as a Novel Regulator of Insulin Action in Adipocytes.</title>
        <authorList>
            <person name="Fazakerley D.J."/>
            <person name="Naghiloo S."/>
            <person name="Chaudhuri R."/>
            <person name="Koumanov F."/>
            <person name="Burchfield J.G."/>
            <person name="Thomas K.C."/>
            <person name="Krycer J.R."/>
            <person name="Prior M.J."/>
            <person name="Parker B.L."/>
            <person name="Murrow B.A."/>
            <person name="Stoeckli J."/>
            <person name="Meoli C.C."/>
            <person name="Holman G.D."/>
            <person name="James D.E."/>
        </authorList>
    </citation>
    <scope>SUBCELLULAR LOCATION</scope>
    <scope>TISSUE SPECIFICITY</scope>
    <scope>FUNCTION</scope>
</reference>
<dbReference type="EMBL" id="AB218813">
    <property type="protein sequence ID" value="BAE75899.1"/>
    <property type="molecule type" value="mRNA"/>
</dbReference>
<dbReference type="RefSeq" id="NP_001034252.1">
    <property type="nucleotide sequence ID" value="NM_001039163.2"/>
</dbReference>
<dbReference type="FunCoup" id="Q2MHH0">
    <property type="interactions" value="36"/>
</dbReference>
<dbReference type="STRING" id="10116.ENSRNOP00000069416"/>
<dbReference type="iPTMnet" id="Q2MHH0"/>
<dbReference type="PhosphoSitePlus" id="Q2MHH0"/>
<dbReference type="SwissPalm" id="Q2MHH0"/>
<dbReference type="PaxDb" id="10116-ENSRNOP00000063657"/>
<dbReference type="Ensembl" id="ENSRNOT00000063941.3">
    <property type="protein sequence ID" value="ENSRNOP00000063657.1"/>
    <property type="gene ID" value="ENSRNOG00000022239.6"/>
</dbReference>
<dbReference type="GeneID" id="360576"/>
<dbReference type="KEGG" id="rno:360576"/>
<dbReference type="AGR" id="RGD:1307639"/>
<dbReference type="CTD" id="286753"/>
<dbReference type="RGD" id="1307639">
    <property type="gene designation" value="Trarg1"/>
</dbReference>
<dbReference type="eggNOG" id="ENOG502RY44">
    <property type="taxonomic scope" value="Eukaryota"/>
</dbReference>
<dbReference type="GeneTree" id="ENSGT00940000160337"/>
<dbReference type="HOGENOM" id="CLU_103195_0_0_1"/>
<dbReference type="InParanoid" id="Q2MHH0"/>
<dbReference type="OMA" id="AITSCFC"/>
<dbReference type="OrthoDB" id="9049275at2759"/>
<dbReference type="PRO" id="PR:Q2MHH0"/>
<dbReference type="Proteomes" id="UP000002494">
    <property type="component" value="Chromosome 10"/>
</dbReference>
<dbReference type="Bgee" id="ENSRNOG00000022239">
    <property type="expression patterns" value="Expressed in pancreas and 16 other cell types or tissues"/>
</dbReference>
<dbReference type="ExpressionAtlas" id="Q2MHH0">
    <property type="expression patterns" value="baseline and differential"/>
</dbReference>
<dbReference type="GO" id="GO:0030659">
    <property type="term" value="C:cytoplasmic vesicle membrane"/>
    <property type="evidence" value="ECO:0000314"/>
    <property type="project" value="UniProtKB"/>
</dbReference>
<dbReference type="GO" id="GO:0012505">
    <property type="term" value="C:endomembrane system"/>
    <property type="evidence" value="ECO:0007669"/>
    <property type="project" value="UniProtKB-SubCell"/>
</dbReference>
<dbReference type="GO" id="GO:0016020">
    <property type="term" value="C:membrane"/>
    <property type="evidence" value="ECO:0000318"/>
    <property type="project" value="GO_Central"/>
</dbReference>
<dbReference type="GO" id="GO:0048471">
    <property type="term" value="C:perinuclear region of cytoplasm"/>
    <property type="evidence" value="ECO:0000266"/>
    <property type="project" value="RGD"/>
</dbReference>
<dbReference type="GO" id="GO:0005886">
    <property type="term" value="C:plasma membrane"/>
    <property type="evidence" value="ECO:0000250"/>
    <property type="project" value="UniProtKB"/>
</dbReference>
<dbReference type="GO" id="GO:0032869">
    <property type="term" value="P:cellular response to insulin stimulus"/>
    <property type="evidence" value="ECO:0000250"/>
    <property type="project" value="UniProtKB"/>
</dbReference>
<dbReference type="GO" id="GO:0099638">
    <property type="term" value="P:endosome to plasma membrane protein transport"/>
    <property type="evidence" value="ECO:0000250"/>
    <property type="project" value="UniProtKB"/>
</dbReference>
<dbReference type="GO" id="GO:0051649">
    <property type="term" value="P:establishment of localization in cell"/>
    <property type="evidence" value="ECO:0000266"/>
    <property type="project" value="RGD"/>
</dbReference>
<dbReference type="GO" id="GO:0044381">
    <property type="term" value="P:glucose import in response to insulin stimulus"/>
    <property type="evidence" value="ECO:0000250"/>
    <property type="project" value="UniProtKB"/>
</dbReference>
<dbReference type="GO" id="GO:0072659">
    <property type="term" value="P:protein localization to plasma membrane"/>
    <property type="evidence" value="ECO:0000250"/>
    <property type="project" value="UniProtKB"/>
</dbReference>
<dbReference type="GO" id="GO:0099500">
    <property type="term" value="P:vesicle fusion to plasma membrane"/>
    <property type="evidence" value="ECO:0000266"/>
    <property type="project" value="RGD"/>
</dbReference>
<dbReference type="InterPro" id="IPR051423">
    <property type="entry name" value="CD225/Dispanin"/>
</dbReference>
<dbReference type="InterPro" id="IPR007593">
    <property type="entry name" value="CD225/Dispanin_fam"/>
</dbReference>
<dbReference type="PANTHER" id="PTHR14948">
    <property type="entry name" value="NG5"/>
    <property type="match status" value="1"/>
</dbReference>
<dbReference type="PANTHER" id="PTHR14948:SF1">
    <property type="entry name" value="TRAFFICKING REGULATOR OF GLUT4 1"/>
    <property type="match status" value="1"/>
</dbReference>
<dbReference type="Pfam" id="PF04505">
    <property type="entry name" value="CD225"/>
    <property type="match status" value="1"/>
</dbReference>
<organism>
    <name type="scientific">Rattus norvegicus</name>
    <name type="common">Rat</name>
    <dbReference type="NCBI Taxonomy" id="10116"/>
    <lineage>
        <taxon>Eukaryota</taxon>
        <taxon>Metazoa</taxon>
        <taxon>Chordata</taxon>
        <taxon>Craniata</taxon>
        <taxon>Vertebrata</taxon>
        <taxon>Euteleostomi</taxon>
        <taxon>Mammalia</taxon>
        <taxon>Eutheria</taxon>
        <taxon>Euarchontoglires</taxon>
        <taxon>Glires</taxon>
        <taxon>Rodentia</taxon>
        <taxon>Myomorpha</taxon>
        <taxon>Muroidea</taxon>
        <taxon>Muridae</taxon>
        <taxon>Murinae</taxon>
        <taxon>Rattus</taxon>
    </lineage>
</organism>
<accession>Q2MHH0</accession>
<gene>
    <name evidence="10" type="primary">Trarg1</name>
    <name type="synonym">Tusc5</name>
</gene>
<feature type="chain" id="PRO_0000263641" description="Trafficking regulator of GLUT4 1">
    <location>
        <begin position="1"/>
        <end position="173"/>
    </location>
</feature>
<feature type="topological domain" description="Cytoplasmic" evidence="1">
    <location>
        <begin position="1"/>
        <end position="102"/>
    </location>
</feature>
<feature type="intramembrane region" description="Helical" evidence="2">
    <location>
        <begin position="103"/>
        <end position="123"/>
    </location>
</feature>
<feature type="topological domain" description="Cytoplasmic" evidence="1">
    <location>
        <begin position="124"/>
        <end position="150"/>
    </location>
</feature>
<feature type="transmembrane region" description="Helical" evidence="2">
    <location>
        <begin position="151"/>
        <end position="171"/>
    </location>
</feature>
<feature type="topological domain" description="Extracellular" evidence="1">
    <location>
        <begin position="172"/>
        <end position="173"/>
    </location>
</feature>
<feature type="region of interest" description="Disordered" evidence="3">
    <location>
        <begin position="1"/>
        <end position="22"/>
    </location>
</feature>
<feature type="compositionally biased region" description="Polar residues" evidence="3">
    <location>
        <begin position="1"/>
        <end position="17"/>
    </location>
</feature>
<feature type="modified residue" description="Phosphoserine" evidence="11">
    <location>
        <position position="16"/>
    </location>
</feature>
<feature type="modified residue" description="Phosphoserine" evidence="11">
    <location>
        <position position="43"/>
    </location>
</feature>
<feature type="modified residue" description="Phosphoserine" evidence="11">
    <location>
        <position position="45"/>
    </location>
</feature>
<feature type="modified residue" description="Phosphoserine" evidence="11">
    <location>
        <position position="70"/>
    </location>
</feature>
<feature type="modified residue" description="Phosphoserine" evidence="11">
    <location>
        <position position="84"/>
    </location>
</feature>
<feature type="modified residue" description="Phosphoserine" evidence="11">
    <location>
        <position position="85"/>
    </location>
</feature>
<protein>
    <recommendedName>
        <fullName>Trafficking regulator of GLUT4 1</fullName>
    </recommendedName>
    <alternativeName>
        <fullName>Brain endothelial cell-derived protein 1</fullName>
        <shortName>BEC-1</shortName>
    </alternativeName>
    <alternativeName>
        <fullName>Dispanin subfamily B member 1</fullName>
        <shortName>DSPB1</shortName>
    </alternativeName>
    <alternativeName>
        <fullName>Tumor suppressor candidate 5 homolog</fullName>
    </alternativeName>
</protein>
<name>TARG1_RAT</name>
<proteinExistence type="evidence at protein level"/>